<accession>B5YS38</accession>
<proteinExistence type="inferred from homology"/>
<gene>
    <name evidence="1" type="primary">yraN</name>
    <name type="ordered locus">ECH74115_4467</name>
</gene>
<evidence type="ECO:0000255" key="1">
    <source>
        <dbReference type="HAMAP-Rule" id="MF_00048"/>
    </source>
</evidence>
<evidence type="ECO:0000256" key="2">
    <source>
        <dbReference type="SAM" id="MobiDB-lite"/>
    </source>
</evidence>
<sequence length="131" mass="14828">MATVPTRSGSPRQLTTKQTGDAWEVQARRWLEGKGLRFVAANVNERGGEIDLIMREGRTTVFVEVRYRRSALYGGAAASVTRSKQHKLLQTARLWLARHNGSFDTVDCRFDVVAFTGNEVEWIKDTFNDHS</sequence>
<comment type="similarity">
    <text evidence="1">Belongs to the UPF0102 family.</text>
</comment>
<name>YRAN_ECO5E</name>
<organism>
    <name type="scientific">Escherichia coli O157:H7 (strain EC4115 / EHEC)</name>
    <dbReference type="NCBI Taxonomy" id="444450"/>
    <lineage>
        <taxon>Bacteria</taxon>
        <taxon>Pseudomonadati</taxon>
        <taxon>Pseudomonadota</taxon>
        <taxon>Gammaproteobacteria</taxon>
        <taxon>Enterobacterales</taxon>
        <taxon>Enterobacteriaceae</taxon>
        <taxon>Escherichia</taxon>
    </lineage>
</organism>
<protein>
    <recommendedName>
        <fullName evidence="1">UPF0102 protein YraN</fullName>
    </recommendedName>
</protein>
<feature type="chain" id="PRO_1000091237" description="UPF0102 protein YraN">
    <location>
        <begin position="1"/>
        <end position="131"/>
    </location>
</feature>
<feature type="region of interest" description="Disordered" evidence="2">
    <location>
        <begin position="1"/>
        <end position="20"/>
    </location>
</feature>
<feature type="compositionally biased region" description="Polar residues" evidence="2">
    <location>
        <begin position="1"/>
        <end position="19"/>
    </location>
</feature>
<dbReference type="EMBL" id="CP001164">
    <property type="protein sequence ID" value="ACI37485.1"/>
    <property type="molecule type" value="Genomic_DNA"/>
</dbReference>
<dbReference type="RefSeq" id="WP_000246856.1">
    <property type="nucleotide sequence ID" value="NC_011353.1"/>
</dbReference>
<dbReference type="SMR" id="B5YS38"/>
<dbReference type="KEGG" id="ecf:ECH74115_4467"/>
<dbReference type="HOGENOM" id="CLU_115353_1_0_6"/>
<dbReference type="GO" id="GO:0003676">
    <property type="term" value="F:nucleic acid binding"/>
    <property type="evidence" value="ECO:0007669"/>
    <property type="project" value="InterPro"/>
</dbReference>
<dbReference type="CDD" id="cd20736">
    <property type="entry name" value="PoNe_Nuclease"/>
    <property type="match status" value="1"/>
</dbReference>
<dbReference type="Gene3D" id="3.40.1350.10">
    <property type="match status" value="1"/>
</dbReference>
<dbReference type="HAMAP" id="MF_00048">
    <property type="entry name" value="UPF0102"/>
    <property type="match status" value="1"/>
</dbReference>
<dbReference type="InterPro" id="IPR011335">
    <property type="entry name" value="Restrct_endonuc-II-like"/>
</dbReference>
<dbReference type="InterPro" id="IPR011856">
    <property type="entry name" value="tRNA_endonuc-like_dom_sf"/>
</dbReference>
<dbReference type="InterPro" id="IPR003509">
    <property type="entry name" value="UPF0102_YraN-like"/>
</dbReference>
<dbReference type="NCBIfam" id="NF009150">
    <property type="entry name" value="PRK12497.1-3"/>
    <property type="match status" value="1"/>
</dbReference>
<dbReference type="NCBIfam" id="TIGR00252">
    <property type="entry name" value="YraN family protein"/>
    <property type="match status" value="1"/>
</dbReference>
<dbReference type="PANTHER" id="PTHR34039">
    <property type="entry name" value="UPF0102 PROTEIN YRAN"/>
    <property type="match status" value="1"/>
</dbReference>
<dbReference type="PANTHER" id="PTHR34039:SF1">
    <property type="entry name" value="UPF0102 PROTEIN YRAN"/>
    <property type="match status" value="1"/>
</dbReference>
<dbReference type="Pfam" id="PF02021">
    <property type="entry name" value="UPF0102"/>
    <property type="match status" value="1"/>
</dbReference>
<dbReference type="SUPFAM" id="SSF52980">
    <property type="entry name" value="Restriction endonuclease-like"/>
    <property type="match status" value="1"/>
</dbReference>
<reference key="1">
    <citation type="journal article" date="2011" name="Proc. Natl. Acad. Sci. U.S.A.">
        <title>Genomic anatomy of Escherichia coli O157:H7 outbreaks.</title>
        <authorList>
            <person name="Eppinger M."/>
            <person name="Mammel M.K."/>
            <person name="Leclerc J.E."/>
            <person name="Ravel J."/>
            <person name="Cebula T.A."/>
        </authorList>
    </citation>
    <scope>NUCLEOTIDE SEQUENCE [LARGE SCALE GENOMIC DNA]</scope>
    <source>
        <strain>EC4115 / EHEC</strain>
    </source>
</reference>